<accession>P26318</accession>
<evidence type="ECO:0000305" key="1"/>
<feature type="chain" id="PRO_0000196353" description="Fimbriae Y protein">
    <location>
        <begin position="1"/>
        <end position="240"/>
    </location>
</feature>
<protein>
    <recommendedName>
        <fullName>Fimbriae Y protein</fullName>
    </recommendedName>
</protein>
<comment type="subcellular location">
    <subcellularLocation>
        <location evidence="1">Fimbrium</location>
    </subcellularLocation>
</comment>
<dbReference type="EMBL" id="M90677">
    <property type="protein sequence ID" value="AAA27064.1"/>
    <property type="molecule type" value="Genomic_DNA"/>
</dbReference>
<dbReference type="EMBL" id="L19338">
    <property type="protein sequence ID" value="AAA75423.1"/>
    <property type="molecule type" value="Genomic_DNA"/>
</dbReference>
<dbReference type="EMBL" id="AE006468">
    <property type="protein sequence ID" value="AAL19504.1"/>
    <property type="molecule type" value="Genomic_DNA"/>
</dbReference>
<dbReference type="PIR" id="A45273">
    <property type="entry name" value="A45273"/>
</dbReference>
<dbReference type="RefSeq" id="NP_459545.1">
    <property type="nucleotide sequence ID" value="NC_003197.2"/>
</dbReference>
<dbReference type="RefSeq" id="WP_001258122.1">
    <property type="nucleotide sequence ID" value="NC_003197.2"/>
</dbReference>
<dbReference type="SMR" id="P26318"/>
<dbReference type="STRING" id="99287.STM0550"/>
<dbReference type="PaxDb" id="99287-STM0550"/>
<dbReference type="GeneID" id="1252070"/>
<dbReference type="KEGG" id="stm:STM0550"/>
<dbReference type="PATRIC" id="fig|99287.12.peg.583"/>
<dbReference type="HOGENOM" id="CLU_098581_1_0_6"/>
<dbReference type="OMA" id="RMAGHFF"/>
<dbReference type="BioCyc" id="SENT99287:STM0550-MONOMER"/>
<dbReference type="Proteomes" id="UP000001014">
    <property type="component" value="Chromosome"/>
</dbReference>
<dbReference type="GO" id="GO:0009289">
    <property type="term" value="C:pilus"/>
    <property type="evidence" value="ECO:0007669"/>
    <property type="project" value="UniProtKB-SubCell"/>
</dbReference>
<name>FIMY_SALTY</name>
<keyword id="KW-0281">Fimbrium</keyword>
<keyword id="KW-1185">Reference proteome</keyword>
<organism>
    <name type="scientific">Salmonella typhimurium (strain LT2 / SGSC1412 / ATCC 700720)</name>
    <dbReference type="NCBI Taxonomy" id="99287"/>
    <lineage>
        <taxon>Bacteria</taxon>
        <taxon>Pseudomonadati</taxon>
        <taxon>Pseudomonadota</taxon>
        <taxon>Gammaproteobacteria</taxon>
        <taxon>Enterobacterales</taxon>
        <taxon>Enterobacteriaceae</taxon>
        <taxon>Salmonella</taxon>
    </lineage>
</organism>
<reference key="1">
    <citation type="journal article" date="1992" name="J. Bacteriol.">
        <title>Identification of ancillary fim genes affecting fimA expression in Salmonella typhimurium.</title>
        <authorList>
            <person name="Swenson D.L."/>
            <person name="Clegg S."/>
        </authorList>
    </citation>
    <scope>NUCLEOTIDE SEQUENCE [GENOMIC DNA]</scope>
</reference>
<reference key="2">
    <citation type="submission" date="1993-06" db="EMBL/GenBank/DDBJ databases">
        <authorList>
            <person name="Swenson D.L."/>
            <person name="Clegg S."/>
        </authorList>
    </citation>
    <scope>NUCLEOTIDE SEQUENCE [GENOMIC DNA]</scope>
</reference>
<reference key="3">
    <citation type="journal article" date="2001" name="Nature">
        <title>Complete genome sequence of Salmonella enterica serovar Typhimurium LT2.</title>
        <authorList>
            <person name="McClelland M."/>
            <person name="Sanderson K.E."/>
            <person name="Spieth J."/>
            <person name="Clifton S.W."/>
            <person name="Latreille P."/>
            <person name="Courtney L."/>
            <person name="Porwollik S."/>
            <person name="Ali J."/>
            <person name="Dante M."/>
            <person name="Du F."/>
            <person name="Hou S."/>
            <person name="Layman D."/>
            <person name="Leonard S."/>
            <person name="Nguyen C."/>
            <person name="Scott K."/>
            <person name="Holmes A."/>
            <person name="Grewal N."/>
            <person name="Mulvaney E."/>
            <person name="Ryan E."/>
            <person name="Sun H."/>
            <person name="Florea L."/>
            <person name="Miller W."/>
            <person name="Stoneking T."/>
            <person name="Nhan M."/>
            <person name="Waterston R."/>
            <person name="Wilson R.K."/>
        </authorList>
    </citation>
    <scope>NUCLEOTIDE SEQUENCE [LARGE SCALE GENOMIC DNA]</scope>
    <source>
        <strain>LT2 / SGSC1412 / ATCC 700720</strain>
    </source>
</reference>
<sequence>MRSVPRRERHRRLRNAKDCACRYHSPTPQIFDRLELLNQQLNYALPVGIISQAIITTDNYLGYSLSHYLFSGKRTAAFRSLDDISLWIEKGSLRQLIVDMEALPVSCIEALNQLRALSWQQSDIQIYLLVSDKTSAITQFIRMAGRFFVLSRRQNLASVREALLSASKPRLSESFSRTDWLMIETLAQGASLKEIARQQSVPYHRVVYRLKQLITLLNLPHRQSFLRLIQQLNVTFHDIF</sequence>
<gene>
    <name type="primary">fimY</name>
    <name type="ordered locus">STM0550</name>
</gene>
<proteinExistence type="predicted"/>